<keyword id="KW-0002">3D-structure</keyword>
<keyword id="KW-0119">Carbohydrate metabolism</keyword>
<keyword id="KW-0165">Cleavage on pair of basic residues</keyword>
<keyword id="KW-0903">Direct protein sequencing</keyword>
<keyword id="KW-1015">Disulfide bond</keyword>
<keyword id="KW-0313">Glucose metabolism</keyword>
<keyword id="KW-0372">Hormone</keyword>
<keyword id="KW-1185">Reference proteome</keyword>
<keyword id="KW-0964">Secreted</keyword>
<keyword id="KW-0732">Signal</keyword>
<sequence>MALLVHFLPLLALLALWEPKPTQAFVKQHLCGPHLVEALYLVCGERGFFYTPKSRREVEDPQVEQLELGGSPGDLQTLALEVARQKRGIVDQCCTSICSLYQLENYCN</sequence>
<feature type="signal peptide" evidence="2">
    <location>
        <begin position="1"/>
        <end position="24"/>
    </location>
</feature>
<feature type="peptide" id="PRO_0000015842" description="Insulin-1 B chain">
    <location>
        <begin position="25"/>
        <end position="54"/>
    </location>
</feature>
<feature type="propeptide" id="PRO_0000015843" description="C peptide">
    <location>
        <begin position="57"/>
        <end position="85"/>
    </location>
</feature>
<feature type="peptide" id="PRO_0000015844" description="Insulin-1 A chain">
    <location>
        <begin position="88"/>
        <end position="108"/>
    </location>
</feature>
<feature type="disulfide bond" description="Interchain (between B and A chains)" evidence="1">
    <location>
        <begin position="31"/>
        <end position="94"/>
    </location>
</feature>
<feature type="disulfide bond" description="Interchain (between B and A chains)" evidence="1">
    <location>
        <begin position="43"/>
        <end position="107"/>
    </location>
</feature>
<feature type="disulfide bond" evidence="1">
    <location>
        <begin position="93"/>
        <end position="98"/>
    </location>
</feature>
<feature type="sequence conflict" description="In Ref. 4; BAB25058." evidence="3" ref="4">
    <original>E</original>
    <variation>K</variation>
    <location>
        <position position="37"/>
    </location>
</feature>
<gene>
    <name type="primary">Ins1</name>
    <name type="synonym">Ins-1</name>
</gene>
<dbReference type="EMBL" id="X04725">
    <property type="protein sequence ID" value="CAA28434.1"/>
    <property type="molecule type" value="Genomic_DNA"/>
</dbReference>
<dbReference type="EMBL" id="DQ479923">
    <property type="protein sequence ID" value="ABF48502.1"/>
    <property type="molecule type" value="Genomic_DNA"/>
</dbReference>
<dbReference type="EMBL" id="AK007345">
    <property type="protein sequence ID" value="BAB24974.1"/>
    <property type="molecule type" value="mRNA"/>
</dbReference>
<dbReference type="EMBL" id="AK007482">
    <property type="protein sequence ID" value="BAB25058.1"/>
    <property type="molecule type" value="mRNA"/>
</dbReference>
<dbReference type="EMBL" id="AK008358">
    <property type="protein sequence ID" value="BAB25628.1"/>
    <property type="molecule type" value="mRNA"/>
</dbReference>
<dbReference type="EMBL" id="AK148541">
    <property type="protein sequence ID" value="BAE28611.1"/>
    <property type="molecule type" value="mRNA"/>
</dbReference>
<dbReference type="EMBL" id="AC163452">
    <property type="status" value="NOT_ANNOTATED_CDS"/>
    <property type="molecule type" value="Genomic_DNA"/>
</dbReference>
<dbReference type="EMBL" id="CH466585">
    <property type="protein sequence ID" value="EDL01682.1"/>
    <property type="molecule type" value="Genomic_DNA"/>
</dbReference>
<dbReference type="EMBL" id="CH466585">
    <property type="protein sequence ID" value="EDL01683.1"/>
    <property type="molecule type" value="Genomic_DNA"/>
</dbReference>
<dbReference type="EMBL" id="BC098468">
    <property type="protein sequence ID" value="AAH98468.1"/>
    <property type="molecule type" value="mRNA"/>
</dbReference>
<dbReference type="EMBL" id="BC145868">
    <property type="protein sequence ID" value="AAI45869.1"/>
    <property type="molecule type" value="mRNA"/>
</dbReference>
<dbReference type="EMBL" id="BC145870">
    <property type="protein sequence ID" value="AAI45871.1"/>
    <property type="molecule type" value="mRNA"/>
</dbReference>
<dbReference type="CCDS" id="CCDS29898.1"/>
<dbReference type="PIR" id="B26342">
    <property type="entry name" value="INMS1"/>
</dbReference>
<dbReference type="RefSeq" id="NP_032412.3">
    <property type="nucleotide sequence ID" value="NM_008386.4"/>
</dbReference>
<dbReference type="PDB" id="3WS3">
    <property type="method" value="X-ray"/>
    <property type="resolution" value="2.34 A"/>
    <property type="chains" value="E/F=101-107"/>
</dbReference>
<dbReference type="PDB" id="7QHP">
    <property type="method" value="X-ray"/>
    <property type="resolution" value="1.82 A"/>
    <property type="chains" value="T=75-87"/>
</dbReference>
<dbReference type="PDBsum" id="3WS3"/>
<dbReference type="PDBsum" id="7QHP"/>
<dbReference type="SMR" id="P01325"/>
<dbReference type="BioGRID" id="200771">
    <property type="interactions" value="1"/>
</dbReference>
<dbReference type="FunCoup" id="P01325">
    <property type="interactions" value="1272"/>
</dbReference>
<dbReference type="MINT" id="P01325"/>
<dbReference type="STRING" id="10090.ENSMUSP00000049095"/>
<dbReference type="PaxDb" id="10090-ENSMUSP00000049095"/>
<dbReference type="ProteomicsDB" id="267143"/>
<dbReference type="ABCD" id="P01325">
    <property type="antibodies" value="1 sequenced antibody"/>
</dbReference>
<dbReference type="DNASU" id="16333"/>
<dbReference type="Ensembl" id="ENSMUST00000039652.6">
    <property type="protein sequence ID" value="ENSMUSP00000049095.5"/>
    <property type="gene ID" value="ENSMUSG00000035804.6"/>
</dbReference>
<dbReference type="GeneID" id="16333"/>
<dbReference type="KEGG" id="mmu:16333"/>
<dbReference type="UCSC" id="uc008hwd.1">
    <property type="organism name" value="mouse"/>
</dbReference>
<dbReference type="AGR" id="MGI:96572"/>
<dbReference type="CTD" id="16333"/>
<dbReference type="MGI" id="MGI:96572">
    <property type="gene designation" value="Ins1"/>
</dbReference>
<dbReference type="VEuPathDB" id="HostDB:ENSMUSG00000035804"/>
<dbReference type="eggNOG" id="ENOG502S5P5">
    <property type="taxonomic scope" value="Eukaryota"/>
</dbReference>
<dbReference type="GeneTree" id="ENSGT00390000015440"/>
<dbReference type="HOGENOM" id="CLU_140421_1_0_1"/>
<dbReference type="InParanoid" id="P01325"/>
<dbReference type="OMA" id="YAFKDQM"/>
<dbReference type="OrthoDB" id="10019596at2759"/>
<dbReference type="PhylomeDB" id="P01325"/>
<dbReference type="TreeFam" id="TF332820"/>
<dbReference type="Reactome" id="R-MMU-264876">
    <property type="pathway name" value="Insulin processing"/>
</dbReference>
<dbReference type="Reactome" id="R-MMU-422085">
    <property type="pathway name" value="Synthesis, secretion, and deacylation of Ghrelin"/>
</dbReference>
<dbReference type="Reactome" id="R-MMU-6807878">
    <property type="pathway name" value="COPI-mediated anterograde transport"/>
</dbReference>
<dbReference type="Reactome" id="R-MMU-6811558">
    <property type="pathway name" value="PI5P, PP2A and IER3 Regulate PI3K/AKT Signaling"/>
</dbReference>
<dbReference type="Reactome" id="R-MMU-74713">
    <property type="pathway name" value="IRS activation"/>
</dbReference>
<dbReference type="Reactome" id="R-MMU-74749">
    <property type="pathway name" value="Signal attenuation"/>
</dbReference>
<dbReference type="Reactome" id="R-MMU-74751">
    <property type="pathway name" value="Insulin receptor signalling cascade"/>
</dbReference>
<dbReference type="Reactome" id="R-MMU-74752">
    <property type="pathway name" value="Signaling by Insulin receptor"/>
</dbReference>
<dbReference type="Reactome" id="R-MMU-77387">
    <property type="pathway name" value="Insulin receptor recycling"/>
</dbReference>
<dbReference type="BioGRID-ORCS" id="16333">
    <property type="hits" value="2 hits in 76 CRISPR screens"/>
</dbReference>
<dbReference type="EvolutionaryTrace" id="P01325"/>
<dbReference type="PRO" id="PR:P01325"/>
<dbReference type="Proteomes" id="UP000000589">
    <property type="component" value="Chromosome 19"/>
</dbReference>
<dbReference type="RNAct" id="P01325">
    <property type="molecule type" value="protein"/>
</dbReference>
<dbReference type="Bgee" id="ENSMUSG00000035804">
    <property type="expression patterns" value="Expressed in islet of Langerhans and 52 other cell types or tissues"/>
</dbReference>
<dbReference type="GO" id="GO:0062023">
    <property type="term" value="C:collagen-containing extracellular matrix"/>
    <property type="evidence" value="ECO:0007005"/>
    <property type="project" value="BHF-UCL"/>
</dbReference>
<dbReference type="GO" id="GO:0005829">
    <property type="term" value="C:cytosol"/>
    <property type="evidence" value="ECO:0000314"/>
    <property type="project" value="MGI"/>
</dbReference>
<dbReference type="GO" id="GO:0005788">
    <property type="term" value="C:endoplasmic reticulum lumen"/>
    <property type="evidence" value="ECO:0000304"/>
    <property type="project" value="Reactome"/>
</dbReference>
<dbReference type="GO" id="GO:0005576">
    <property type="term" value="C:extracellular region"/>
    <property type="evidence" value="ECO:0000304"/>
    <property type="project" value="Reactome"/>
</dbReference>
<dbReference type="GO" id="GO:0005615">
    <property type="term" value="C:extracellular space"/>
    <property type="evidence" value="ECO:0000314"/>
    <property type="project" value="MGI"/>
</dbReference>
<dbReference type="GO" id="GO:0034774">
    <property type="term" value="C:secretory granule lumen"/>
    <property type="evidence" value="ECO:0000304"/>
    <property type="project" value="Reactome"/>
</dbReference>
<dbReference type="GO" id="GO:0005179">
    <property type="term" value="F:hormone activity"/>
    <property type="evidence" value="ECO:0007669"/>
    <property type="project" value="UniProtKB-KW"/>
</dbReference>
<dbReference type="GO" id="GO:0005158">
    <property type="term" value="F:insulin receptor binding"/>
    <property type="evidence" value="ECO:0007669"/>
    <property type="project" value="Ensembl"/>
</dbReference>
<dbReference type="GO" id="GO:0048018">
    <property type="term" value="F:receptor ligand activity"/>
    <property type="evidence" value="ECO:0000266"/>
    <property type="project" value="MGI"/>
</dbReference>
<dbReference type="GO" id="GO:0030297">
    <property type="term" value="F:transmembrane receptor protein tyrosine kinase activator activity"/>
    <property type="evidence" value="ECO:0000266"/>
    <property type="project" value="MGI"/>
</dbReference>
<dbReference type="GO" id="GO:0071333">
    <property type="term" value="P:cellular response to glucose stimulus"/>
    <property type="evidence" value="ECO:0007669"/>
    <property type="project" value="Ensembl"/>
</dbReference>
<dbReference type="GO" id="GO:1904659">
    <property type="term" value="P:D-glucose transmembrane transport"/>
    <property type="evidence" value="ECO:0000304"/>
    <property type="project" value="MGI"/>
</dbReference>
<dbReference type="GO" id="GO:0006006">
    <property type="term" value="P:glucose metabolic process"/>
    <property type="evidence" value="ECO:0007669"/>
    <property type="project" value="UniProtKB-KW"/>
</dbReference>
<dbReference type="GO" id="GO:0008286">
    <property type="term" value="P:insulin receptor signaling pathway"/>
    <property type="evidence" value="ECO:0000315"/>
    <property type="project" value="MGI"/>
</dbReference>
<dbReference type="GO" id="GO:0031623">
    <property type="term" value="P:receptor internalization"/>
    <property type="evidence" value="ECO:0000314"/>
    <property type="project" value="MGI"/>
</dbReference>
<dbReference type="GO" id="GO:0051591">
    <property type="term" value="P:response to cAMP"/>
    <property type="evidence" value="ECO:0007669"/>
    <property type="project" value="Ensembl"/>
</dbReference>
<dbReference type="GO" id="GO:0034097">
    <property type="term" value="P:response to cytokine"/>
    <property type="evidence" value="ECO:0007669"/>
    <property type="project" value="Ensembl"/>
</dbReference>
<dbReference type="GO" id="GO:1904619">
    <property type="term" value="P:response to dimethyl sulfoxide"/>
    <property type="evidence" value="ECO:0007669"/>
    <property type="project" value="Ensembl"/>
</dbReference>
<dbReference type="CDD" id="cd04367">
    <property type="entry name" value="IlGF_insulin_like"/>
    <property type="match status" value="1"/>
</dbReference>
<dbReference type="FunFam" id="1.10.100.10:FF:000003">
    <property type="entry name" value="Insulin"/>
    <property type="match status" value="1"/>
</dbReference>
<dbReference type="Gene3D" id="1.10.100.10">
    <property type="entry name" value="Insulin-like"/>
    <property type="match status" value="1"/>
</dbReference>
<dbReference type="InterPro" id="IPR004825">
    <property type="entry name" value="Insulin"/>
</dbReference>
<dbReference type="InterPro" id="IPR016179">
    <property type="entry name" value="Insulin-like"/>
</dbReference>
<dbReference type="InterPro" id="IPR036438">
    <property type="entry name" value="Insulin-like_sf"/>
</dbReference>
<dbReference type="InterPro" id="IPR022353">
    <property type="entry name" value="Insulin_CS"/>
</dbReference>
<dbReference type="InterPro" id="IPR022352">
    <property type="entry name" value="Insulin_family"/>
</dbReference>
<dbReference type="PANTHER" id="PTHR11454:SF9">
    <property type="entry name" value="INSULIN"/>
    <property type="match status" value="1"/>
</dbReference>
<dbReference type="PANTHER" id="PTHR11454">
    <property type="entry name" value="INSULIN/INSULIN GROWTH FACTOR"/>
    <property type="match status" value="1"/>
</dbReference>
<dbReference type="Pfam" id="PF00049">
    <property type="entry name" value="Insulin"/>
    <property type="match status" value="1"/>
</dbReference>
<dbReference type="PRINTS" id="PR00277">
    <property type="entry name" value="INSULIN"/>
</dbReference>
<dbReference type="PRINTS" id="PR00276">
    <property type="entry name" value="INSULINFAMLY"/>
</dbReference>
<dbReference type="SMART" id="SM00078">
    <property type="entry name" value="IlGF"/>
    <property type="match status" value="1"/>
</dbReference>
<dbReference type="SUPFAM" id="SSF56994">
    <property type="entry name" value="Insulin-like"/>
    <property type="match status" value="1"/>
</dbReference>
<dbReference type="PROSITE" id="PS00262">
    <property type="entry name" value="INSULIN"/>
    <property type="match status" value="1"/>
</dbReference>
<name>INS1_MOUSE</name>
<comment type="function">
    <text>Insulin decreases blood glucose concentration. It increases cell permeability to monosaccharides, amino acids and fatty acids. It accelerates glycolysis, the pentose phosphate cycle, and glycogen synthesis in liver.</text>
</comment>
<comment type="subunit">
    <text evidence="1">Heterodimer of a B chain and an A chain linked by two disulfide bonds.</text>
</comment>
<comment type="subcellular location">
    <subcellularLocation>
        <location>Secreted</location>
    </subcellularLocation>
</comment>
<comment type="similarity">
    <text evidence="3">Belongs to the insulin family.</text>
</comment>
<reference key="1">
    <citation type="journal article" date="1986" name="J. Mol. Evol.">
        <title>Characterization of the two nonallelic genes encoding mouse preproinsulin.</title>
        <authorList>
            <person name="Wentworth B.M."/>
            <person name="Schaefer I.M."/>
            <person name="Villa-Komaroff L."/>
            <person name="Chirgwin J.M."/>
        </authorList>
    </citation>
    <scope>NUCLEOTIDE SEQUENCE [GENOMIC DNA]</scope>
</reference>
<reference key="2">
    <citation type="journal article" date="1990" name="J. Mol. Endocrinol.">
        <title>Molecular cloning and DNA sequence analysis of preproinsulin genes in the NON mouse, an animal model of human non-obese, non-insulin-dependent diabetes mellitus.</title>
        <authorList>
            <person name="Sawa T."/>
            <person name="Ohgaku S."/>
            <person name="Morioka H."/>
            <person name="Yano S."/>
        </authorList>
    </citation>
    <scope>NUCLEOTIDE SEQUENCE [GENOMIC DNA]</scope>
    <source>
        <strain>NON/ShiLtJ</strain>
    </source>
</reference>
<reference key="3">
    <citation type="journal article" date="2006" name="Nat. Genet.">
        <title>Positional cloning of Sorcs1, a type 2 diabetes quantitative trait locus.</title>
        <authorList>
            <person name="Clee S.M."/>
            <person name="Yandell B.S."/>
            <person name="Schueler K.M."/>
            <person name="Rabaglia M.E."/>
            <person name="Richards O.C."/>
            <person name="Raines S.M."/>
            <person name="Kabara E.A."/>
            <person name="Klass D.M."/>
            <person name="Mui E.T.-K."/>
            <person name="Stapleton D.S."/>
            <person name="Gray-Keller M.P."/>
            <person name="Young M.B."/>
            <person name="Stoehr J.P."/>
            <person name="Lan H."/>
            <person name="Boronenkov I."/>
            <person name="Raess P.W."/>
            <person name="Flowers M.T."/>
            <person name="Attie A.D."/>
        </authorList>
    </citation>
    <scope>NUCLEOTIDE SEQUENCE [GENOMIC DNA]</scope>
    <source>
        <strain>BTBR T+ tf/J</strain>
    </source>
</reference>
<reference key="4">
    <citation type="journal article" date="2005" name="Science">
        <title>The transcriptional landscape of the mammalian genome.</title>
        <authorList>
            <person name="Carninci P."/>
            <person name="Kasukawa T."/>
            <person name="Katayama S."/>
            <person name="Gough J."/>
            <person name="Frith M.C."/>
            <person name="Maeda N."/>
            <person name="Oyama R."/>
            <person name="Ravasi T."/>
            <person name="Lenhard B."/>
            <person name="Wells C."/>
            <person name="Kodzius R."/>
            <person name="Shimokawa K."/>
            <person name="Bajic V.B."/>
            <person name="Brenner S.E."/>
            <person name="Batalov S."/>
            <person name="Forrest A.R."/>
            <person name="Zavolan M."/>
            <person name="Davis M.J."/>
            <person name="Wilming L.G."/>
            <person name="Aidinis V."/>
            <person name="Allen J.E."/>
            <person name="Ambesi-Impiombato A."/>
            <person name="Apweiler R."/>
            <person name="Aturaliya R.N."/>
            <person name="Bailey T.L."/>
            <person name="Bansal M."/>
            <person name="Baxter L."/>
            <person name="Beisel K.W."/>
            <person name="Bersano T."/>
            <person name="Bono H."/>
            <person name="Chalk A.M."/>
            <person name="Chiu K.P."/>
            <person name="Choudhary V."/>
            <person name="Christoffels A."/>
            <person name="Clutterbuck D.R."/>
            <person name="Crowe M.L."/>
            <person name="Dalla E."/>
            <person name="Dalrymple B.P."/>
            <person name="de Bono B."/>
            <person name="Della Gatta G."/>
            <person name="di Bernardo D."/>
            <person name="Down T."/>
            <person name="Engstrom P."/>
            <person name="Fagiolini M."/>
            <person name="Faulkner G."/>
            <person name="Fletcher C.F."/>
            <person name="Fukushima T."/>
            <person name="Furuno M."/>
            <person name="Futaki S."/>
            <person name="Gariboldi M."/>
            <person name="Georgii-Hemming P."/>
            <person name="Gingeras T.R."/>
            <person name="Gojobori T."/>
            <person name="Green R.E."/>
            <person name="Gustincich S."/>
            <person name="Harbers M."/>
            <person name="Hayashi Y."/>
            <person name="Hensch T.K."/>
            <person name="Hirokawa N."/>
            <person name="Hill D."/>
            <person name="Huminiecki L."/>
            <person name="Iacono M."/>
            <person name="Ikeo K."/>
            <person name="Iwama A."/>
            <person name="Ishikawa T."/>
            <person name="Jakt M."/>
            <person name="Kanapin A."/>
            <person name="Katoh M."/>
            <person name="Kawasawa Y."/>
            <person name="Kelso J."/>
            <person name="Kitamura H."/>
            <person name="Kitano H."/>
            <person name="Kollias G."/>
            <person name="Krishnan S.P."/>
            <person name="Kruger A."/>
            <person name="Kummerfeld S.K."/>
            <person name="Kurochkin I.V."/>
            <person name="Lareau L.F."/>
            <person name="Lazarevic D."/>
            <person name="Lipovich L."/>
            <person name="Liu J."/>
            <person name="Liuni S."/>
            <person name="McWilliam S."/>
            <person name="Madan Babu M."/>
            <person name="Madera M."/>
            <person name="Marchionni L."/>
            <person name="Matsuda H."/>
            <person name="Matsuzawa S."/>
            <person name="Miki H."/>
            <person name="Mignone F."/>
            <person name="Miyake S."/>
            <person name="Morris K."/>
            <person name="Mottagui-Tabar S."/>
            <person name="Mulder N."/>
            <person name="Nakano N."/>
            <person name="Nakauchi H."/>
            <person name="Ng P."/>
            <person name="Nilsson R."/>
            <person name="Nishiguchi S."/>
            <person name="Nishikawa S."/>
            <person name="Nori F."/>
            <person name="Ohara O."/>
            <person name="Okazaki Y."/>
            <person name="Orlando V."/>
            <person name="Pang K.C."/>
            <person name="Pavan W.J."/>
            <person name="Pavesi G."/>
            <person name="Pesole G."/>
            <person name="Petrovsky N."/>
            <person name="Piazza S."/>
            <person name="Reed J."/>
            <person name="Reid J.F."/>
            <person name="Ring B.Z."/>
            <person name="Ringwald M."/>
            <person name="Rost B."/>
            <person name="Ruan Y."/>
            <person name="Salzberg S.L."/>
            <person name="Sandelin A."/>
            <person name="Schneider C."/>
            <person name="Schoenbach C."/>
            <person name="Sekiguchi K."/>
            <person name="Semple C.A."/>
            <person name="Seno S."/>
            <person name="Sessa L."/>
            <person name="Sheng Y."/>
            <person name="Shibata Y."/>
            <person name="Shimada H."/>
            <person name="Shimada K."/>
            <person name="Silva D."/>
            <person name="Sinclair B."/>
            <person name="Sperling S."/>
            <person name="Stupka E."/>
            <person name="Sugiura K."/>
            <person name="Sultana R."/>
            <person name="Takenaka Y."/>
            <person name="Taki K."/>
            <person name="Tammoja K."/>
            <person name="Tan S.L."/>
            <person name="Tang S."/>
            <person name="Taylor M.S."/>
            <person name="Tegner J."/>
            <person name="Teichmann S.A."/>
            <person name="Ueda H.R."/>
            <person name="van Nimwegen E."/>
            <person name="Verardo R."/>
            <person name="Wei C.L."/>
            <person name="Yagi K."/>
            <person name="Yamanishi H."/>
            <person name="Zabarovsky E."/>
            <person name="Zhu S."/>
            <person name="Zimmer A."/>
            <person name="Hide W."/>
            <person name="Bult C."/>
            <person name="Grimmond S.M."/>
            <person name="Teasdale R.D."/>
            <person name="Liu E.T."/>
            <person name="Brusic V."/>
            <person name="Quackenbush J."/>
            <person name="Wahlestedt C."/>
            <person name="Mattick J.S."/>
            <person name="Hume D.A."/>
            <person name="Kai C."/>
            <person name="Sasaki D."/>
            <person name="Tomaru Y."/>
            <person name="Fukuda S."/>
            <person name="Kanamori-Katayama M."/>
            <person name="Suzuki M."/>
            <person name="Aoki J."/>
            <person name="Arakawa T."/>
            <person name="Iida J."/>
            <person name="Imamura K."/>
            <person name="Itoh M."/>
            <person name="Kato T."/>
            <person name="Kawaji H."/>
            <person name="Kawagashira N."/>
            <person name="Kawashima T."/>
            <person name="Kojima M."/>
            <person name="Kondo S."/>
            <person name="Konno H."/>
            <person name="Nakano K."/>
            <person name="Ninomiya N."/>
            <person name="Nishio T."/>
            <person name="Okada M."/>
            <person name="Plessy C."/>
            <person name="Shibata K."/>
            <person name="Shiraki T."/>
            <person name="Suzuki S."/>
            <person name="Tagami M."/>
            <person name="Waki K."/>
            <person name="Watahiki A."/>
            <person name="Okamura-Oho Y."/>
            <person name="Suzuki H."/>
            <person name="Kawai J."/>
            <person name="Hayashizaki Y."/>
        </authorList>
    </citation>
    <scope>NUCLEOTIDE SEQUENCE [LARGE SCALE MRNA]</scope>
    <source>
        <strain>C57BL/6J</strain>
        <tissue>Pancreas</tissue>
        <tissue>Pancreas islet cell</tissue>
    </source>
</reference>
<reference key="5">
    <citation type="journal article" date="2009" name="PLoS Biol.">
        <title>Lineage-specific biology revealed by a finished genome assembly of the mouse.</title>
        <authorList>
            <person name="Church D.M."/>
            <person name="Goodstadt L."/>
            <person name="Hillier L.W."/>
            <person name="Zody M.C."/>
            <person name="Goldstein S."/>
            <person name="She X."/>
            <person name="Bult C.J."/>
            <person name="Agarwala R."/>
            <person name="Cherry J.L."/>
            <person name="DiCuccio M."/>
            <person name="Hlavina W."/>
            <person name="Kapustin Y."/>
            <person name="Meric P."/>
            <person name="Maglott D."/>
            <person name="Birtle Z."/>
            <person name="Marques A.C."/>
            <person name="Graves T."/>
            <person name="Zhou S."/>
            <person name="Teague B."/>
            <person name="Potamousis K."/>
            <person name="Churas C."/>
            <person name="Place M."/>
            <person name="Herschleb J."/>
            <person name="Runnheim R."/>
            <person name="Forrest D."/>
            <person name="Amos-Landgraf J."/>
            <person name="Schwartz D.C."/>
            <person name="Cheng Z."/>
            <person name="Lindblad-Toh K."/>
            <person name="Eichler E.E."/>
            <person name="Ponting C.P."/>
        </authorList>
    </citation>
    <scope>NUCLEOTIDE SEQUENCE [LARGE SCALE GENOMIC DNA]</scope>
    <source>
        <strain>C57BL/6J</strain>
    </source>
</reference>
<reference key="6">
    <citation type="submission" date="2005-07" db="EMBL/GenBank/DDBJ databases">
        <authorList>
            <person name="Mural R.J."/>
            <person name="Adams M.D."/>
            <person name="Myers E.W."/>
            <person name="Smith H.O."/>
            <person name="Venter J.C."/>
        </authorList>
    </citation>
    <scope>NUCLEOTIDE SEQUENCE [LARGE SCALE GENOMIC DNA]</scope>
</reference>
<reference key="7">
    <citation type="journal article" date="2004" name="Genome Res.">
        <title>The status, quality, and expansion of the NIH full-length cDNA project: the Mammalian Gene Collection (MGC).</title>
        <authorList>
            <consortium name="The MGC Project Team"/>
        </authorList>
    </citation>
    <scope>NUCLEOTIDE SEQUENCE [LARGE SCALE MRNA]</scope>
    <source>
        <tissue>Pancreas</tissue>
    </source>
</reference>
<reference key="8">
    <citation type="journal article" date="1972" name="Hoppe-Seyler's Z. Physiol. Chem.">
        <title>Amino acid sequence of the two insulins from mouse (Maus musculus).</title>
        <authorList>
            <person name="Buenzli H.F."/>
            <person name="Glatthaar B."/>
            <person name="Kunz P."/>
            <person name="Muelhaupt E."/>
            <person name="Humbel R.E."/>
        </authorList>
    </citation>
    <scope>PROTEIN SEQUENCE OF 25-54 AND 88-108</scope>
</reference>
<reference key="9">
    <citation type="journal article" date="2010" name="Cell">
        <title>A tissue-specific atlas of mouse protein phosphorylation and expression.</title>
        <authorList>
            <person name="Huttlin E.L."/>
            <person name="Jedrychowski M.P."/>
            <person name="Elias J.E."/>
            <person name="Goswami T."/>
            <person name="Rad R."/>
            <person name="Beausoleil S.A."/>
            <person name="Villen J."/>
            <person name="Haas W."/>
            <person name="Sowa M.E."/>
            <person name="Gygi S.P."/>
        </authorList>
    </citation>
    <scope>IDENTIFICATION BY MASS SPECTROMETRY [LARGE SCALE ANALYSIS]</scope>
    <source>
        <tissue>Pancreas</tissue>
    </source>
</reference>
<organism>
    <name type="scientific">Mus musculus</name>
    <name type="common">Mouse</name>
    <dbReference type="NCBI Taxonomy" id="10090"/>
    <lineage>
        <taxon>Eukaryota</taxon>
        <taxon>Metazoa</taxon>
        <taxon>Chordata</taxon>
        <taxon>Craniata</taxon>
        <taxon>Vertebrata</taxon>
        <taxon>Euteleostomi</taxon>
        <taxon>Mammalia</taxon>
        <taxon>Eutheria</taxon>
        <taxon>Euarchontoglires</taxon>
        <taxon>Glires</taxon>
        <taxon>Rodentia</taxon>
        <taxon>Myomorpha</taxon>
        <taxon>Muroidea</taxon>
        <taxon>Muridae</taxon>
        <taxon>Murinae</taxon>
        <taxon>Mus</taxon>
        <taxon>Mus</taxon>
    </lineage>
</organism>
<evidence type="ECO:0000250" key="1">
    <source>
        <dbReference type="UniProtKB" id="P01308"/>
    </source>
</evidence>
<evidence type="ECO:0000269" key="2">
    <source>
    </source>
</evidence>
<evidence type="ECO:0000305" key="3"/>
<proteinExistence type="evidence at protein level"/>
<accession>P01325</accession>
<accession>Q545I7</accession>
<accession>Q9D907</accession>
<protein>
    <recommendedName>
        <fullName>Insulin-1</fullName>
    </recommendedName>
    <component>
        <recommendedName>
            <fullName>Insulin-1 B chain</fullName>
        </recommendedName>
    </component>
    <component>
        <recommendedName>
            <fullName>Insulin-1 A chain</fullName>
        </recommendedName>
    </component>
</protein>